<comment type="function">
    <text evidence="1">Phosphoribosylformylglycinamidine synthase involved in the purines biosynthetic pathway. Catalyzes the ATP-dependent conversion of formylglycinamide ribonucleotide (FGAR) and glutamine to yield formylglycinamidine ribonucleotide (FGAM) and glutamate.</text>
</comment>
<comment type="catalytic activity">
    <reaction evidence="1">
        <text>N(2)-formyl-N(1)-(5-phospho-beta-D-ribosyl)glycinamide + L-glutamine + ATP + H2O = 2-formamido-N(1)-(5-O-phospho-beta-D-ribosyl)acetamidine + L-glutamate + ADP + phosphate + H(+)</text>
        <dbReference type="Rhea" id="RHEA:17129"/>
        <dbReference type="ChEBI" id="CHEBI:15377"/>
        <dbReference type="ChEBI" id="CHEBI:15378"/>
        <dbReference type="ChEBI" id="CHEBI:29985"/>
        <dbReference type="ChEBI" id="CHEBI:30616"/>
        <dbReference type="ChEBI" id="CHEBI:43474"/>
        <dbReference type="ChEBI" id="CHEBI:58359"/>
        <dbReference type="ChEBI" id="CHEBI:147286"/>
        <dbReference type="ChEBI" id="CHEBI:147287"/>
        <dbReference type="ChEBI" id="CHEBI:456216"/>
        <dbReference type="EC" id="6.3.5.3"/>
    </reaction>
</comment>
<comment type="pathway">
    <text evidence="1">Purine metabolism; IMP biosynthesis via de novo pathway; 5-amino-1-(5-phospho-D-ribosyl)imidazole from N(2)-formyl-N(1)-(5-phospho-D-ribosyl)glycinamide: step 1/2.</text>
</comment>
<comment type="subunit">
    <text evidence="1">Monomer.</text>
</comment>
<comment type="subcellular location">
    <subcellularLocation>
        <location evidence="1">Cytoplasm</location>
    </subcellularLocation>
</comment>
<comment type="similarity">
    <text evidence="1">In the N-terminal section; belongs to the FGAMS family.</text>
</comment>
<protein>
    <recommendedName>
        <fullName evidence="1">Phosphoribosylformylglycinamidine synthase</fullName>
        <shortName evidence="1">FGAM synthase</shortName>
        <shortName evidence="1">FGAMS</shortName>
        <ecNumber evidence="1">6.3.5.3</ecNumber>
    </recommendedName>
    <alternativeName>
        <fullName evidence="1">Formylglycinamide ribonucleotide amidotransferase</fullName>
        <shortName evidence="1">FGAR amidotransferase</shortName>
        <shortName evidence="1">FGAR-AT</shortName>
    </alternativeName>
</protein>
<evidence type="ECO:0000255" key="1">
    <source>
        <dbReference type="HAMAP-Rule" id="MF_00419"/>
    </source>
</evidence>
<evidence type="ECO:0000256" key="2">
    <source>
        <dbReference type="SAM" id="MobiDB-lite"/>
    </source>
</evidence>
<dbReference type="EC" id="6.3.5.3" evidence="1"/>
<dbReference type="EMBL" id="CP000447">
    <property type="protein sequence ID" value="ABI70994.1"/>
    <property type="molecule type" value="Genomic_DNA"/>
</dbReference>
<dbReference type="RefSeq" id="WP_011636615.1">
    <property type="nucleotide sequence ID" value="NC_008345.1"/>
</dbReference>
<dbReference type="SMR" id="Q085S1"/>
<dbReference type="STRING" id="318167.Sfri_1141"/>
<dbReference type="KEGG" id="sfr:Sfri_1141"/>
<dbReference type="eggNOG" id="COG0046">
    <property type="taxonomic scope" value="Bacteria"/>
</dbReference>
<dbReference type="eggNOG" id="COG0047">
    <property type="taxonomic scope" value="Bacteria"/>
</dbReference>
<dbReference type="HOGENOM" id="CLU_001031_0_2_6"/>
<dbReference type="OrthoDB" id="9804441at2"/>
<dbReference type="UniPathway" id="UPA00074">
    <property type="reaction ID" value="UER00128"/>
</dbReference>
<dbReference type="Proteomes" id="UP000000684">
    <property type="component" value="Chromosome"/>
</dbReference>
<dbReference type="GO" id="GO:0005737">
    <property type="term" value="C:cytoplasm"/>
    <property type="evidence" value="ECO:0007669"/>
    <property type="project" value="UniProtKB-SubCell"/>
</dbReference>
<dbReference type="GO" id="GO:0005524">
    <property type="term" value="F:ATP binding"/>
    <property type="evidence" value="ECO:0007669"/>
    <property type="project" value="UniProtKB-UniRule"/>
</dbReference>
<dbReference type="GO" id="GO:0046872">
    <property type="term" value="F:metal ion binding"/>
    <property type="evidence" value="ECO:0007669"/>
    <property type="project" value="UniProtKB-KW"/>
</dbReference>
<dbReference type="GO" id="GO:0004642">
    <property type="term" value="F:phosphoribosylformylglycinamidine synthase activity"/>
    <property type="evidence" value="ECO:0007669"/>
    <property type="project" value="UniProtKB-UniRule"/>
</dbReference>
<dbReference type="GO" id="GO:0006189">
    <property type="term" value="P:'de novo' IMP biosynthetic process"/>
    <property type="evidence" value="ECO:0007669"/>
    <property type="project" value="UniProtKB-UniRule"/>
</dbReference>
<dbReference type="CDD" id="cd01740">
    <property type="entry name" value="GATase1_FGAR_AT"/>
    <property type="match status" value="1"/>
</dbReference>
<dbReference type="CDD" id="cd02203">
    <property type="entry name" value="PurL_repeat1"/>
    <property type="match status" value="1"/>
</dbReference>
<dbReference type="CDD" id="cd02204">
    <property type="entry name" value="PurL_repeat2"/>
    <property type="match status" value="1"/>
</dbReference>
<dbReference type="FunFam" id="1.10.8.750:FF:000002">
    <property type="entry name" value="Phosphoribosylformylglycinamidine synthase"/>
    <property type="match status" value="1"/>
</dbReference>
<dbReference type="FunFam" id="3.30.1330.10:FF:000002">
    <property type="entry name" value="Phosphoribosylformylglycinamidine synthase"/>
    <property type="match status" value="1"/>
</dbReference>
<dbReference type="FunFam" id="3.30.1330.10:FF:000005">
    <property type="entry name" value="Phosphoribosylformylglycinamidine synthase"/>
    <property type="match status" value="1"/>
</dbReference>
<dbReference type="FunFam" id="3.40.50.880:FF:000008">
    <property type="entry name" value="Phosphoribosylformylglycinamidine synthase"/>
    <property type="match status" value="1"/>
</dbReference>
<dbReference type="FunFam" id="3.90.650.10:FF:000002">
    <property type="entry name" value="Phosphoribosylformylglycinamidine synthase"/>
    <property type="match status" value="1"/>
</dbReference>
<dbReference type="Gene3D" id="3.40.50.880">
    <property type="match status" value="1"/>
</dbReference>
<dbReference type="Gene3D" id="1.10.8.750">
    <property type="entry name" value="Phosphoribosylformylglycinamidine synthase, linker domain"/>
    <property type="match status" value="1"/>
</dbReference>
<dbReference type="Gene3D" id="3.90.650.10">
    <property type="entry name" value="PurM-like C-terminal domain"/>
    <property type="match status" value="2"/>
</dbReference>
<dbReference type="Gene3D" id="3.30.1330.10">
    <property type="entry name" value="PurM-like, N-terminal domain"/>
    <property type="match status" value="2"/>
</dbReference>
<dbReference type="HAMAP" id="MF_00419">
    <property type="entry name" value="PurL_1"/>
    <property type="match status" value="1"/>
</dbReference>
<dbReference type="InterPro" id="IPR029062">
    <property type="entry name" value="Class_I_gatase-like"/>
</dbReference>
<dbReference type="InterPro" id="IPR040707">
    <property type="entry name" value="FGAR-AT_N"/>
</dbReference>
<dbReference type="InterPro" id="IPR055181">
    <property type="entry name" value="FGAR-AT_PurM_N-like"/>
</dbReference>
<dbReference type="InterPro" id="IPR010073">
    <property type="entry name" value="PurL_large"/>
</dbReference>
<dbReference type="InterPro" id="IPR041609">
    <property type="entry name" value="PurL_linker"/>
</dbReference>
<dbReference type="InterPro" id="IPR010918">
    <property type="entry name" value="PurM-like_C_dom"/>
</dbReference>
<dbReference type="InterPro" id="IPR036676">
    <property type="entry name" value="PurM-like_C_sf"/>
</dbReference>
<dbReference type="InterPro" id="IPR036921">
    <property type="entry name" value="PurM-like_N_sf"/>
</dbReference>
<dbReference type="InterPro" id="IPR036604">
    <property type="entry name" value="PurS-like_sf"/>
</dbReference>
<dbReference type="NCBIfam" id="TIGR01735">
    <property type="entry name" value="FGAM_synt"/>
    <property type="match status" value="1"/>
</dbReference>
<dbReference type="NCBIfam" id="NF003672">
    <property type="entry name" value="PRK05297.1"/>
    <property type="match status" value="1"/>
</dbReference>
<dbReference type="PANTHER" id="PTHR10099">
    <property type="entry name" value="PHOSPHORIBOSYLFORMYLGLYCINAMIDINE SYNTHASE"/>
    <property type="match status" value="1"/>
</dbReference>
<dbReference type="PANTHER" id="PTHR10099:SF1">
    <property type="entry name" value="PHOSPHORIBOSYLFORMYLGLYCINAMIDINE SYNTHASE"/>
    <property type="match status" value="1"/>
</dbReference>
<dbReference type="Pfam" id="PF02769">
    <property type="entry name" value="AIRS_C"/>
    <property type="match status" value="2"/>
</dbReference>
<dbReference type="Pfam" id="PF18072">
    <property type="entry name" value="FGAR-AT_linker"/>
    <property type="match status" value="1"/>
</dbReference>
<dbReference type="Pfam" id="PF18076">
    <property type="entry name" value="FGAR-AT_N"/>
    <property type="match status" value="1"/>
</dbReference>
<dbReference type="Pfam" id="PF22689">
    <property type="entry name" value="FGAR-AT_PurM_N-like"/>
    <property type="match status" value="1"/>
</dbReference>
<dbReference type="Pfam" id="PF13507">
    <property type="entry name" value="GATase_5"/>
    <property type="match status" value="1"/>
</dbReference>
<dbReference type="SMART" id="SM01211">
    <property type="entry name" value="GATase_5"/>
    <property type="match status" value="1"/>
</dbReference>
<dbReference type="SUPFAM" id="SSF52317">
    <property type="entry name" value="Class I glutamine amidotransferase-like"/>
    <property type="match status" value="1"/>
</dbReference>
<dbReference type="SUPFAM" id="SSF109736">
    <property type="entry name" value="FGAM synthase PurL, linker domain"/>
    <property type="match status" value="1"/>
</dbReference>
<dbReference type="SUPFAM" id="SSF56042">
    <property type="entry name" value="PurM C-terminal domain-like"/>
    <property type="match status" value="2"/>
</dbReference>
<dbReference type="SUPFAM" id="SSF55326">
    <property type="entry name" value="PurM N-terminal domain-like"/>
    <property type="match status" value="2"/>
</dbReference>
<dbReference type="SUPFAM" id="SSF82697">
    <property type="entry name" value="PurS-like"/>
    <property type="match status" value="1"/>
</dbReference>
<dbReference type="PROSITE" id="PS51273">
    <property type="entry name" value="GATASE_TYPE_1"/>
    <property type="match status" value="1"/>
</dbReference>
<reference key="1">
    <citation type="submission" date="2006-08" db="EMBL/GenBank/DDBJ databases">
        <title>Complete sequence of Shewanella frigidimarina NCIMB 400.</title>
        <authorList>
            <consortium name="US DOE Joint Genome Institute"/>
            <person name="Copeland A."/>
            <person name="Lucas S."/>
            <person name="Lapidus A."/>
            <person name="Barry K."/>
            <person name="Detter J.C."/>
            <person name="Glavina del Rio T."/>
            <person name="Hammon N."/>
            <person name="Israni S."/>
            <person name="Dalin E."/>
            <person name="Tice H."/>
            <person name="Pitluck S."/>
            <person name="Fredrickson J.K."/>
            <person name="Kolker E."/>
            <person name="McCuel L.A."/>
            <person name="DiChristina T."/>
            <person name="Nealson K.H."/>
            <person name="Newman D."/>
            <person name="Tiedje J.M."/>
            <person name="Zhou J."/>
            <person name="Romine M.F."/>
            <person name="Culley D.E."/>
            <person name="Serres M."/>
            <person name="Chertkov O."/>
            <person name="Brettin T."/>
            <person name="Bruce D."/>
            <person name="Han C."/>
            <person name="Tapia R."/>
            <person name="Gilna P."/>
            <person name="Schmutz J."/>
            <person name="Larimer F."/>
            <person name="Land M."/>
            <person name="Hauser L."/>
            <person name="Kyrpides N."/>
            <person name="Mikhailova N."/>
            <person name="Richardson P."/>
        </authorList>
    </citation>
    <scope>NUCLEOTIDE SEQUENCE [LARGE SCALE GENOMIC DNA]</scope>
    <source>
        <strain>NCIMB 400</strain>
    </source>
</reference>
<organism>
    <name type="scientific">Shewanella frigidimarina (strain NCIMB 400)</name>
    <dbReference type="NCBI Taxonomy" id="318167"/>
    <lineage>
        <taxon>Bacteria</taxon>
        <taxon>Pseudomonadati</taxon>
        <taxon>Pseudomonadota</taxon>
        <taxon>Gammaproteobacteria</taxon>
        <taxon>Alteromonadales</taxon>
        <taxon>Shewanellaceae</taxon>
        <taxon>Shewanella</taxon>
    </lineage>
</organism>
<keyword id="KW-0067">ATP-binding</keyword>
<keyword id="KW-0963">Cytoplasm</keyword>
<keyword id="KW-0315">Glutamine amidotransferase</keyword>
<keyword id="KW-0436">Ligase</keyword>
<keyword id="KW-0460">Magnesium</keyword>
<keyword id="KW-0479">Metal-binding</keyword>
<keyword id="KW-0547">Nucleotide-binding</keyword>
<keyword id="KW-0658">Purine biosynthesis</keyword>
<keyword id="KW-1185">Reference proteome</keyword>
<accession>Q085S1</accession>
<sequence>MEIIRGAPALSAFRVQKLMEACENAALPVSQIYAEYVHLASLSEPLDDNERLQLETILTYGPAIESHAPQGTLLFVTPRPGTISPWSSKATDIAHNCGLGKVSRLERGIAYYVEASVLTAEQQKLLQGLLHDRMVEVMLPAFEAAEVLFARTEPAKFSSVNILAEGRRALEVANIKLGLALADDEIDYLIENFVRLKRNPNDIELMMFAQANSEHCRHKIFNADWTIDGEVQLKSLFKMIKNTFEVTPDYVLSAYKDNAAVMTGSVAGRFFPDPDGIYNYHTEPMHILMKVETHNHPTAISPYPGAATGSGGEIRDEGATGRGSKPKAGLSGFTVSNLKIPGFVQPWEGDYGKPDRIVTPLEIMLEGPLGGAAFNNEFGRPAITGYFRTYEQLVSSHNGVEVRGYHKPIMIAGGLGNIREDHVQKGEITIGAKLIVLGGPAMNIGLGGGAASSMASGQSSEDLDFASVQRENPEMERRCQEVIDRCWQLGDTNPIQFIHDVGAGGLSNAFPELVNDADRGGVFNLRNVPSDEPGMSPLEIWCNESQERYVLSVAPENLQQFADICARERAPFAVVGEATAEMHLTLADSHFNNKPIDLPLEVLLGKAPKMSRDVVTAKAVSPALDQTKIELKDAVKRILTLPTVADKTFLITIGDRSVTGLVNRDQMVGPWQVPVADCAVTASSYDSYCGEAMSMGERTPLALLDFDASARMAVAESIMNIAGTDIGSFKRIKLSANWMSPAGHPGEDAGLYQAVKAIGEDLCPELGITIPVGKDSMSMKTAWEDNGTQKTVTSPMSLVITAFGVVQDIRKTVTPQLRSDKGDSALLMLDLSNGQNRLGGSCLAQVYSELGDIAPTLDKTANLAGFFEVMQQLVADQAVMAYHDRSDGGLFTTLVEMAFAGNTGLTIDLASLSGTDLERLFNEEIGAVIQVSAIDAKAIAAQFEAKGVTCHHIGGLQTADKISINDGERVIFADSRTALRTLWSETTYRMQALRDNPECAREEYELKQQADAPGLTVKLGFNPSEDVAAPYILKGVAPKMAILREQGVNSHVEMAAAFDRAGFESRDVHMSDILSGRISLEEFQGLVACGGFSYGDVLGAGEGWAKSILFNDRARDEFSRFFERDSSIALGVCNGCQMLSNLKEIIPGSEHWPRFVRNRSERFEARFSLVEVQQNPSVFFEGMVGSRMPIAVSHGEGLVEFANAQALANAEASGTIALRYVDGHGQIATQYPENPNGSANGLTGICTTDGRVTIMMPHPERVFRTVANSWHPDNWGEDSPWMRMFRNARVKIG</sequence>
<name>PUR4_SHEFN</name>
<gene>
    <name evidence="1" type="primary">purL</name>
    <name type="ordered locus">Sfri_1141</name>
</gene>
<proteinExistence type="inferred from homology"/>
<feature type="chain" id="PRO_0000264594" description="Phosphoribosylformylglycinamidine synthase">
    <location>
        <begin position="1"/>
        <end position="1293"/>
    </location>
</feature>
<feature type="domain" description="Glutamine amidotransferase type-1" evidence="1">
    <location>
        <begin position="1040"/>
        <end position="1293"/>
    </location>
</feature>
<feature type="region of interest" description="Disordered" evidence="2">
    <location>
        <begin position="307"/>
        <end position="326"/>
    </location>
</feature>
<feature type="active site" description="Nucleophile" evidence="1">
    <location>
        <position position="1133"/>
    </location>
</feature>
<feature type="active site" evidence="1">
    <location>
        <position position="1258"/>
    </location>
</feature>
<feature type="active site" evidence="1">
    <location>
        <position position="1260"/>
    </location>
</feature>
<feature type="binding site" evidence="1">
    <location>
        <begin position="305"/>
        <end position="316"/>
    </location>
    <ligand>
        <name>ATP</name>
        <dbReference type="ChEBI" id="CHEBI:30616"/>
    </ligand>
</feature>
<feature type="binding site" evidence="1">
    <location>
        <begin position="384"/>
        <end position="386"/>
    </location>
    <ligand>
        <name>ATP</name>
        <dbReference type="ChEBI" id="CHEBI:30616"/>
    </ligand>
</feature>
<feature type="binding site" evidence="1">
    <location>
        <position position="676"/>
    </location>
    <ligand>
        <name>ATP</name>
        <dbReference type="ChEBI" id="CHEBI:30616"/>
    </ligand>
</feature>
<feature type="binding site" evidence="1">
    <location>
        <position position="677"/>
    </location>
    <ligand>
        <name>Mg(2+)</name>
        <dbReference type="ChEBI" id="CHEBI:18420"/>
    </ligand>
</feature>
<feature type="binding site" evidence="1">
    <location>
        <position position="716"/>
    </location>
    <ligand>
        <name>Mg(2+)</name>
        <dbReference type="ChEBI" id="CHEBI:18420"/>
    </ligand>
</feature>
<feature type="binding site" evidence="1">
    <location>
        <position position="720"/>
    </location>
    <ligand>
        <name>Mg(2+)</name>
        <dbReference type="ChEBI" id="CHEBI:18420"/>
    </ligand>
</feature>
<feature type="binding site" evidence="1">
    <location>
        <position position="884"/>
    </location>
    <ligand>
        <name>Mg(2+)</name>
        <dbReference type="ChEBI" id="CHEBI:18420"/>
    </ligand>
</feature>
<feature type="binding site" evidence="1">
    <location>
        <position position="886"/>
    </location>
    <ligand>
        <name>ATP</name>
        <dbReference type="ChEBI" id="CHEBI:30616"/>
    </ligand>
</feature>